<reference key="1">
    <citation type="submission" date="2006-08" db="EMBL/GenBank/DDBJ databases">
        <title>Complete sequence of Shewanella sp. MR-4.</title>
        <authorList>
            <consortium name="US DOE Joint Genome Institute"/>
            <person name="Copeland A."/>
            <person name="Lucas S."/>
            <person name="Lapidus A."/>
            <person name="Barry K."/>
            <person name="Detter J.C."/>
            <person name="Glavina del Rio T."/>
            <person name="Hammon N."/>
            <person name="Israni S."/>
            <person name="Dalin E."/>
            <person name="Tice H."/>
            <person name="Pitluck S."/>
            <person name="Kiss H."/>
            <person name="Brettin T."/>
            <person name="Bruce D."/>
            <person name="Han C."/>
            <person name="Tapia R."/>
            <person name="Gilna P."/>
            <person name="Schmutz J."/>
            <person name="Larimer F."/>
            <person name="Land M."/>
            <person name="Hauser L."/>
            <person name="Kyrpides N."/>
            <person name="Mikhailova N."/>
            <person name="Nealson K."/>
            <person name="Konstantinidis K."/>
            <person name="Klappenbach J."/>
            <person name="Tiedje J."/>
            <person name="Richardson P."/>
        </authorList>
    </citation>
    <scope>NUCLEOTIDE SEQUENCE [LARGE SCALE GENOMIC DNA]</scope>
    <source>
        <strain>MR-4</strain>
    </source>
</reference>
<feature type="chain" id="PRO_1000051427" description="Asparagine--tRNA ligase">
    <location>
        <begin position="1"/>
        <end position="466"/>
    </location>
</feature>
<dbReference type="EC" id="6.1.1.22" evidence="1"/>
<dbReference type="EMBL" id="CP000446">
    <property type="protein sequence ID" value="ABI39201.1"/>
    <property type="molecule type" value="Genomic_DNA"/>
</dbReference>
<dbReference type="RefSeq" id="WP_011622891.1">
    <property type="nucleotide sequence ID" value="NC_008321.1"/>
</dbReference>
<dbReference type="SMR" id="Q0HIB6"/>
<dbReference type="KEGG" id="she:Shewmr4_2128"/>
<dbReference type="HOGENOM" id="CLU_004553_2_0_6"/>
<dbReference type="GO" id="GO:0005737">
    <property type="term" value="C:cytoplasm"/>
    <property type="evidence" value="ECO:0007669"/>
    <property type="project" value="UniProtKB-SubCell"/>
</dbReference>
<dbReference type="GO" id="GO:0004816">
    <property type="term" value="F:asparagine-tRNA ligase activity"/>
    <property type="evidence" value="ECO:0007669"/>
    <property type="project" value="UniProtKB-UniRule"/>
</dbReference>
<dbReference type="GO" id="GO:0005524">
    <property type="term" value="F:ATP binding"/>
    <property type="evidence" value="ECO:0007669"/>
    <property type="project" value="UniProtKB-UniRule"/>
</dbReference>
<dbReference type="GO" id="GO:0003676">
    <property type="term" value="F:nucleic acid binding"/>
    <property type="evidence" value="ECO:0007669"/>
    <property type="project" value="InterPro"/>
</dbReference>
<dbReference type="GO" id="GO:0006421">
    <property type="term" value="P:asparaginyl-tRNA aminoacylation"/>
    <property type="evidence" value="ECO:0007669"/>
    <property type="project" value="UniProtKB-UniRule"/>
</dbReference>
<dbReference type="CDD" id="cd00776">
    <property type="entry name" value="AsxRS_core"/>
    <property type="match status" value="1"/>
</dbReference>
<dbReference type="CDD" id="cd04318">
    <property type="entry name" value="EcAsnRS_like_N"/>
    <property type="match status" value="1"/>
</dbReference>
<dbReference type="FunFam" id="3.30.930.10:FF:000016">
    <property type="entry name" value="Asparagine--tRNA ligase"/>
    <property type="match status" value="1"/>
</dbReference>
<dbReference type="Gene3D" id="3.30.930.10">
    <property type="entry name" value="Bira Bifunctional Protein, Domain 2"/>
    <property type="match status" value="1"/>
</dbReference>
<dbReference type="Gene3D" id="2.40.50.140">
    <property type="entry name" value="Nucleic acid-binding proteins"/>
    <property type="match status" value="1"/>
</dbReference>
<dbReference type="HAMAP" id="MF_00534">
    <property type="entry name" value="Asn_tRNA_synth"/>
    <property type="match status" value="1"/>
</dbReference>
<dbReference type="InterPro" id="IPR004364">
    <property type="entry name" value="Aa-tRNA-synt_II"/>
</dbReference>
<dbReference type="InterPro" id="IPR006195">
    <property type="entry name" value="aa-tRNA-synth_II"/>
</dbReference>
<dbReference type="InterPro" id="IPR045864">
    <property type="entry name" value="aa-tRNA-synth_II/BPL/LPL"/>
</dbReference>
<dbReference type="InterPro" id="IPR004522">
    <property type="entry name" value="Asn-tRNA-ligase"/>
</dbReference>
<dbReference type="InterPro" id="IPR002312">
    <property type="entry name" value="Asp/Asn-tRNA-synth_IIb"/>
</dbReference>
<dbReference type="InterPro" id="IPR012340">
    <property type="entry name" value="NA-bd_OB-fold"/>
</dbReference>
<dbReference type="InterPro" id="IPR004365">
    <property type="entry name" value="NA-bd_OB_tRNA"/>
</dbReference>
<dbReference type="NCBIfam" id="TIGR00457">
    <property type="entry name" value="asnS"/>
    <property type="match status" value="1"/>
</dbReference>
<dbReference type="NCBIfam" id="NF003037">
    <property type="entry name" value="PRK03932.1"/>
    <property type="match status" value="1"/>
</dbReference>
<dbReference type="PANTHER" id="PTHR22594:SF34">
    <property type="entry name" value="ASPARAGINE--TRNA LIGASE, MITOCHONDRIAL-RELATED"/>
    <property type="match status" value="1"/>
</dbReference>
<dbReference type="PANTHER" id="PTHR22594">
    <property type="entry name" value="ASPARTYL/LYSYL-TRNA SYNTHETASE"/>
    <property type="match status" value="1"/>
</dbReference>
<dbReference type="Pfam" id="PF00152">
    <property type="entry name" value="tRNA-synt_2"/>
    <property type="match status" value="1"/>
</dbReference>
<dbReference type="Pfam" id="PF01336">
    <property type="entry name" value="tRNA_anti-codon"/>
    <property type="match status" value="1"/>
</dbReference>
<dbReference type="PRINTS" id="PR01042">
    <property type="entry name" value="TRNASYNTHASP"/>
</dbReference>
<dbReference type="SUPFAM" id="SSF55681">
    <property type="entry name" value="Class II aaRS and biotin synthetases"/>
    <property type="match status" value="1"/>
</dbReference>
<dbReference type="SUPFAM" id="SSF50249">
    <property type="entry name" value="Nucleic acid-binding proteins"/>
    <property type="match status" value="1"/>
</dbReference>
<dbReference type="PROSITE" id="PS50862">
    <property type="entry name" value="AA_TRNA_LIGASE_II"/>
    <property type="match status" value="1"/>
</dbReference>
<keyword id="KW-0030">Aminoacyl-tRNA synthetase</keyword>
<keyword id="KW-0067">ATP-binding</keyword>
<keyword id="KW-0963">Cytoplasm</keyword>
<keyword id="KW-0436">Ligase</keyword>
<keyword id="KW-0547">Nucleotide-binding</keyword>
<keyword id="KW-0648">Protein biosynthesis</keyword>
<organism>
    <name type="scientific">Shewanella sp. (strain MR-4)</name>
    <dbReference type="NCBI Taxonomy" id="60480"/>
    <lineage>
        <taxon>Bacteria</taxon>
        <taxon>Pseudomonadati</taxon>
        <taxon>Pseudomonadota</taxon>
        <taxon>Gammaproteobacteria</taxon>
        <taxon>Alteromonadales</taxon>
        <taxon>Shewanellaceae</taxon>
        <taxon>Shewanella</taxon>
    </lineage>
</organism>
<name>SYN_SHESM</name>
<sequence>MSIASVASVFKGEHAVGSTVTVRGWVRTRRDSKAGISFLAVYDGSCFNPIQGVVPNSLENYDNEVLKLTAGCSVIVTGEIVESPGAGQAYELQVTQVEVTGWVEDPDTYPMAAKRHSIEHLRELAHLRPRTNIIGAVARVRNCLSQAIHRFYHENGFVWVSTPLITASDCEGAGEMFRVSTLDMENLPRTSDGKVDYDKDFFGKEAFLTVSGQLNGETYACALSKIYTFGPTFRAENSNTSRHLAEFWMVEPEVAFATLSDIANLAEGMLKYAFNAVLAERMDDLQFFAQHVDKTVIERLQSFVSSDFAQVDYTDAVEILQKCGREFEFPVSWGIDLSSEHERYLAEEHFKAPVVVKNYPKDIKAFYMRLNEDGKTVAAMDVLAPGIGEIIGGSQREERLDVLDMRLEEMDLNKEDYWWYRDLRRYGTVPHAGFGLGFERLVSYVTGVSNIRDVIPFPRAPRTANF</sequence>
<gene>
    <name evidence="1" type="primary">asnS</name>
    <name type="ordered locus">Shewmr4_2128</name>
</gene>
<comment type="catalytic activity">
    <reaction evidence="1">
        <text>tRNA(Asn) + L-asparagine + ATP = L-asparaginyl-tRNA(Asn) + AMP + diphosphate + H(+)</text>
        <dbReference type="Rhea" id="RHEA:11180"/>
        <dbReference type="Rhea" id="RHEA-COMP:9659"/>
        <dbReference type="Rhea" id="RHEA-COMP:9674"/>
        <dbReference type="ChEBI" id="CHEBI:15378"/>
        <dbReference type="ChEBI" id="CHEBI:30616"/>
        <dbReference type="ChEBI" id="CHEBI:33019"/>
        <dbReference type="ChEBI" id="CHEBI:58048"/>
        <dbReference type="ChEBI" id="CHEBI:78442"/>
        <dbReference type="ChEBI" id="CHEBI:78515"/>
        <dbReference type="ChEBI" id="CHEBI:456215"/>
        <dbReference type="EC" id="6.1.1.22"/>
    </reaction>
</comment>
<comment type="subunit">
    <text evidence="1">Homodimer.</text>
</comment>
<comment type="subcellular location">
    <subcellularLocation>
        <location evidence="1">Cytoplasm</location>
    </subcellularLocation>
</comment>
<comment type="similarity">
    <text evidence="1">Belongs to the class-II aminoacyl-tRNA synthetase family.</text>
</comment>
<proteinExistence type="inferred from homology"/>
<evidence type="ECO:0000255" key="1">
    <source>
        <dbReference type="HAMAP-Rule" id="MF_00534"/>
    </source>
</evidence>
<accession>Q0HIB6</accession>
<protein>
    <recommendedName>
        <fullName evidence="1">Asparagine--tRNA ligase</fullName>
        <ecNumber evidence="1">6.1.1.22</ecNumber>
    </recommendedName>
    <alternativeName>
        <fullName evidence="1">Asparaginyl-tRNA synthetase</fullName>
        <shortName evidence="1">AsnRS</shortName>
    </alternativeName>
</protein>